<sequence length="251" mass="28878">MILYEYPFNERIRTLLRLEDLFERFTFFVAQEDAREHHVALTTLFEISEVAGRADLKSDLMKELERQRQTLAPFRGNPGIEQNALEAVLGEIEQTLANLAQMQGKTGQHLIDNEWLASIRSRAVIPGGTCKFDLPSYYAWQQWPAEQRRHDIAKWAMPLLPLRDAAMIVLRLARESGQASKVMAMQGSYQQMLSGRTYQLMQVRVPPELRVIPEASANKYMLWVRFTAQDGDVRPRAVDIDVPFQLTLCNL</sequence>
<organism>
    <name type="scientific">Burkholderia mallei (strain NCTC 10247)</name>
    <dbReference type="NCBI Taxonomy" id="320389"/>
    <lineage>
        <taxon>Bacteria</taxon>
        <taxon>Pseudomonadati</taxon>
        <taxon>Pseudomonadota</taxon>
        <taxon>Betaproteobacteria</taxon>
        <taxon>Burkholderiales</taxon>
        <taxon>Burkholderiaceae</taxon>
        <taxon>Burkholderia</taxon>
        <taxon>pseudomallei group</taxon>
    </lineage>
</organism>
<comment type="function">
    <text evidence="1">Cell division factor that enhances FtsZ-ring assembly. Directly interacts with FtsZ and promotes bundling of FtsZ protofilaments, with a reduction in FtsZ GTPase activity.</text>
</comment>
<comment type="subunit">
    <text evidence="1">Interacts with FtsZ.</text>
</comment>
<comment type="subcellular location">
    <subcellularLocation>
        <location evidence="1">Cytoplasm</location>
    </subcellularLocation>
    <text evidence="1">Localizes to mid-cell in an FtsZ-dependent manner.</text>
</comment>
<comment type="similarity">
    <text evidence="1">Belongs to the ZapD family.</text>
</comment>
<name>ZAPD_BURM7</name>
<feature type="chain" id="PRO_1000064894" description="Cell division protein ZapD">
    <location>
        <begin position="1"/>
        <end position="251"/>
    </location>
</feature>
<dbReference type="EMBL" id="CP000548">
    <property type="protein sequence ID" value="ABO05045.1"/>
    <property type="molecule type" value="Genomic_DNA"/>
</dbReference>
<dbReference type="RefSeq" id="WP_004195118.1">
    <property type="nucleotide sequence ID" value="NZ_CP007802.1"/>
</dbReference>
<dbReference type="SMR" id="A3MR78"/>
<dbReference type="GeneID" id="93061613"/>
<dbReference type="KEGG" id="bmaz:BM44_124"/>
<dbReference type="KEGG" id="bmn:BMA10247_3247"/>
<dbReference type="PATRIC" id="fig|320389.8.peg.131"/>
<dbReference type="GO" id="GO:0032153">
    <property type="term" value="C:cell division site"/>
    <property type="evidence" value="ECO:0007669"/>
    <property type="project" value="TreeGrafter"/>
</dbReference>
<dbReference type="GO" id="GO:0005737">
    <property type="term" value="C:cytoplasm"/>
    <property type="evidence" value="ECO:0007669"/>
    <property type="project" value="UniProtKB-SubCell"/>
</dbReference>
<dbReference type="GO" id="GO:0000917">
    <property type="term" value="P:division septum assembly"/>
    <property type="evidence" value="ECO:0007669"/>
    <property type="project" value="UniProtKB-KW"/>
</dbReference>
<dbReference type="GO" id="GO:0043093">
    <property type="term" value="P:FtsZ-dependent cytokinesis"/>
    <property type="evidence" value="ECO:0007669"/>
    <property type="project" value="UniProtKB-UniRule"/>
</dbReference>
<dbReference type="Gene3D" id="1.10.3900.10">
    <property type="entry name" value="YacF-like"/>
    <property type="match status" value="1"/>
</dbReference>
<dbReference type="Gene3D" id="2.60.440.10">
    <property type="entry name" value="YacF-like domains"/>
    <property type="match status" value="1"/>
</dbReference>
<dbReference type="HAMAP" id="MF_01092">
    <property type="entry name" value="ZapD"/>
    <property type="match status" value="1"/>
</dbReference>
<dbReference type="InterPro" id="IPR009777">
    <property type="entry name" value="ZapD"/>
</dbReference>
<dbReference type="InterPro" id="IPR027462">
    <property type="entry name" value="ZapD_C"/>
</dbReference>
<dbReference type="InterPro" id="IPR036268">
    <property type="entry name" value="ZapD_sf"/>
</dbReference>
<dbReference type="NCBIfam" id="NF003656">
    <property type="entry name" value="PRK05287.1-4"/>
    <property type="match status" value="1"/>
</dbReference>
<dbReference type="PANTHER" id="PTHR39455">
    <property type="entry name" value="CELL DIVISION PROTEIN ZAPD"/>
    <property type="match status" value="1"/>
</dbReference>
<dbReference type="PANTHER" id="PTHR39455:SF1">
    <property type="entry name" value="CELL DIVISION PROTEIN ZAPD"/>
    <property type="match status" value="1"/>
</dbReference>
<dbReference type="Pfam" id="PF07072">
    <property type="entry name" value="ZapD"/>
    <property type="match status" value="1"/>
</dbReference>
<dbReference type="SUPFAM" id="SSF160950">
    <property type="entry name" value="YacF-like"/>
    <property type="match status" value="1"/>
</dbReference>
<evidence type="ECO:0000255" key="1">
    <source>
        <dbReference type="HAMAP-Rule" id="MF_01092"/>
    </source>
</evidence>
<proteinExistence type="inferred from homology"/>
<reference key="1">
    <citation type="journal article" date="2010" name="Genome Biol. Evol.">
        <title>Continuing evolution of Burkholderia mallei through genome reduction and large-scale rearrangements.</title>
        <authorList>
            <person name="Losada L."/>
            <person name="Ronning C.M."/>
            <person name="DeShazer D."/>
            <person name="Woods D."/>
            <person name="Fedorova N."/>
            <person name="Kim H.S."/>
            <person name="Shabalina S.A."/>
            <person name="Pearson T.R."/>
            <person name="Brinkac L."/>
            <person name="Tan P."/>
            <person name="Nandi T."/>
            <person name="Crabtree J."/>
            <person name="Badger J."/>
            <person name="Beckstrom-Sternberg S."/>
            <person name="Saqib M."/>
            <person name="Schutzer S.E."/>
            <person name="Keim P."/>
            <person name="Nierman W.C."/>
        </authorList>
    </citation>
    <scope>NUCLEOTIDE SEQUENCE [LARGE SCALE GENOMIC DNA]</scope>
    <source>
        <strain>NCTC 10247</strain>
    </source>
</reference>
<keyword id="KW-0131">Cell cycle</keyword>
<keyword id="KW-0132">Cell division</keyword>
<keyword id="KW-0963">Cytoplasm</keyword>
<keyword id="KW-0717">Septation</keyword>
<accession>A3MR78</accession>
<gene>
    <name evidence="1" type="primary">zapD</name>
    <name type="ordered locus">BMA10247_3247</name>
</gene>
<protein>
    <recommendedName>
        <fullName evidence="1">Cell division protein ZapD</fullName>
    </recommendedName>
    <alternativeName>
        <fullName evidence="1">Z ring-associated protein D</fullName>
    </alternativeName>
</protein>